<organism>
    <name type="scientific">Helicobacter hepaticus (strain ATCC 51449 / 3B1)</name>
    <dbReference type="NCBI Taxonomy" id="235279"/>
    <lineage>
        <taxon>Bacteria</taxon>
        <taxon>Pseudomonadati</taxon>
        <taxon>Campylobacterota</taxon>
        <taxon>Epsilonproteobacteria</taxon>
        <taxon>Campylobacterales</taxon>
        <taxon>Helicobacteraceae</taxon>
        <taxon>Helicobacter</taxon>
    </lineage>
</organism>
<proteinExistence type="inferred from homology"/>
<evidence type="ECO:0000255" key="1">
    <source>
        <dbReference type="HAMAP-Rule" id="MF_00281"/>
    </source>
</evidence>
<evidence type="ECO:0000305" key="2"/>
<accession>Q7VK64</accession>
<name>SYFA_HELHP</name>
<reference key="1">
    <citation type="journal article" date="2003" name="Proc. Natl. Acad. Sci. U.S.A.">
        <title>The complete genome sequence of the carcinogenic bacterium Helicobacter hepaticus.</title>
        <authorList>
            <person name="Suerbaum S."/>
            <person name="Josenhans C."/>
            <person name="Sterzenbach T."/>
            <person name="Drescher B."/>
            <person name="Brandt P."/>
            <person name="Bell M."/>
            <person name="Droege M."/>
            <person name="Fartmann B."/>
            <person name="Fischer H.-P."/>
            <person name="Ge Z."/>
            <person name="Hoerster A."/>
            <person name="Holland R."/>
            <person name="Klein K."/>
            <person name="Koenig J."/>
            <person name="Macko L."/>
            <person name="Mendz G.L."/>
            <person name="Nyakatura G."/>
            <person name="Schauer D.B."/>
            <person name="Shen Z."/>
            <person name="Weber J."/>
            <person name="Frosch M."/>
            <person name="Fox J.G."/>
        </authorList>
    </citation>
    <scope>NUCLEOTIDE SEQUENCE [LARGE SCALE GENOMIC DNA]</scope>
    <source>
        <strain>ATCC 51449 / 3B1</strain>
    </source>
</reference>
<dbReference type="EC" id="6.1.1.20" evidence="1"/>
<dbReference type="EMBL" id="AE017125">
    <property type="protein sequence ID" value="AAP76625.1"/>
    <property type="status" value="ALT_INIT"/>
    <property type="molecule type" value="Genomic_DNA"/>
</dbReference>
<dbReference type="RefSeq" id="WP_041309170.1">
    <property type="nucleotide sequence ID" value="NC_004917.1"/>
</dbReference>
<dbReference type="SMR" id="Q7VK64"/>
<dbReference type="STRING" id="235279.HH_0028"/>
<dbReference type="KEGG" id="hhe:HH_0028"/>
<dbReference type="eggNOG" id="COG0016">
    <property type="taxonomic scope" value="Bacteria"/>
</dbReference>
<dbReference type="HOGENOM" id="CLU_025086_0_1_7"/>
<dbReference type="Proteomes" id="UP000002495">
    <property type="component" value="Chromosome"/>
</dbReference>
<dbReference type="GO" id="GO:0005737">
    <property type="term" value="C:cytoplasm"/>
    <property type="evidence" value="ECO:0007669"/>
    <property type="project" value="UniProtKB-SubCell"/>
</dbReference>
<dbReference type="GO" id="GO:0005524">
    <property type="term" value="F:ATP binding"/>
    <property type="evidence" value="ECO:0007669"/>
    <property type="project" value="UniProtKB-UniRule"/>
</dbReference>
<dbReference type="GO" id="GO:0000287">
    <property type="term" value="F:magnesium ion binding"/>
    <property type="evidence" value="ECO:0007669"/>
    <property type="project" value="UniProtKB-UniRule"/>
</dbReference>
<dbReference type="GO" id="GO:0004826">
    <property type="term" value="F:phenylalanine-tRNA ligase activity"/>
    <property type="evidence" value="ECO:0007669"/>
    <property type="project" value="UniProtKB-UniRule"/>
</dbReference>
<dbReference type="GO" id="GO:0000049">
    <property type="term" value="F:tRNA binding"/>
    <property type="evidence" value="ECO:0007669"/>
    <property type="project" value="InterPro"/>
</dbReference>
<dbReference type="GO" id="GO:0006432">
    <property type="term" value="P:phenylalanyl-tRNA aminoacylation"/>
    <property type="evidence" value="ECO:0007669"/>
    <property type="project" value="UniProtKB-UniRule"/>
</dbReference>
<dbReference type="CDD" id="cd00496">
    <property type="entry name" value="PheRS_alpha_core"/>
    <property type="match status" value="1"/>
</dbReference>
<dbReference type="Gene3D" id="3.30.930.10">
    <property type="entry name" value="Bira Bifunctional Protein, Domain 2"/>
    <property type="match status" value="1"/>
</dbReference>
<dbReference type="HAMAP" id="MF_00281">
    <property type="entry name" value="Phe_tRNA_synth_alpha1"/>
    <property type="match status" value="1"/>
</dbReference>
<dbReference type="InterPro" id="IPR006195">
    <property type="entry name" value="aa-tRNA-synth_II"/>
</dbReference>
<dbReference type="InterPro" id="IPR045864">
    <property type="entry name" value="aa-tRNA-synth_II/BPL/LPL"/>
</dbReference>
<dbReference type="InterPro" id="IPR004529">
    <property type="entry name" value="Phe-tRNA-synth_IIc_asu"/>
</dbReference>
<dbReference type="InterPro" id="IPR004188">
    <property type="entry name" value="Phe-tRNA_ligase_II_N"/>
</dbReference>
<dbReference type="InterPro" id="IPR022911">
    <property type="entry name" value="Phe_tRNA_ligase_alpha1_bac"/>
</dbReference>
<dbReference type="InterPro" id="IPR002319">
    <property type="entry name" value="Phenylalanyl-tRNA_Synthase"/>
</dbReference>
<dbReference type="InterPro" id="IPR010978">
    <property type="entry name" value="tRNA-bd_arm"/>
</dbReference>
<dbReference type="NCBIfam" id="TIGR00468">
    <property type="entry name" value="pheS"/>
    <property type="match status" value="1"/>
</dbReference>
<dbReference type="PANTHER" id="PTHR11538:SF41">
    <property type="entry name" value="PHENYLALANINE--TRNA LIGASE, MITOCHONDRIAL"/>
    <property type="match status" value="1"/>
</dbReference>
<dbReference type="PANTHER" id="PTHR11538">
    <property type="entry name" value="PHENYLALANYL-TRNA SYNTHETASE"/>
    <property type="match status" value="1"/>
</dbReference>
<dbReference type="Pfam" id="PF02912">
    <property type="entry name" value="Phe_tRNA-synt_N"/>
    <property type="match status" value="1"/>
</dbReference>
<dbReference type="Pfam" id="PF01409">
    <property type="entry name" value="tRNA-synt_2d"/>
    <property type="match status" value="1"/>
</dbReference>
<dbReference type="SUPFAM" id="SSF55681">
    <property type="entry name" value="Class II aaRS and biotin synthetases"/>
    <property type="match status" value="1"/>
</dbReference>
<dbReference type="SUPFAM" id="SSF46589">
    <property type="entry name" value="tRNA-binding arm"/>
    <property type="match status" value="1"/>
</dbReference>
<dbReference type="PROSITE" id="PS50862">
    <property type="entry name" value="AA_TRNA_LIGASE_II"/>
    <property type="match status" value="1"/>
</dbReference>
<keyword id="KW-0030">Aminoacyl-tRNA synthetase</keyword>
<keyword id="KW-0067">ATP-binding</keyword>
<keyword id="KW-0963">Cytoplasm</keyword>
<keyword id="KW-0436">Ligase</keyword>
<keyword id="KW-0460">Magnesium</keyword>
<keyword id="KW-0479">Metal-binding</keyword>
<keyword id="KW-0547">Nucleotide-binding</keyword>
<keyword id="KW-0648">Protein biosynthesis</keyword>
<keyword id="KW-1185">Reference proteome</keyword>
<gene>
    <name evidence="1" type="primary">pheS</name>
    <name type="ordered locus">HH_0028</name>
</gene>
<feature type="chain" id="PRO_0000126713" description="Phenylalanine--tRNA ligase alpha subunit">
    <location>
        <begin position="1"/>
        <end position="329"/>
    </location>
</feature>
<feature type="binding site" evidence="1">
    <location>
        <position position="246"/>
    </location>
    <ligand>
        <name>Mg(2+)</name>
        <dbReference type="ChEBI" id="CHEBI:18420"/>
        <note>shared with beta subunit</note>
    </ligand>
</feature>
<sequence>MQEIMAKLEQLENLNDLERLRVEVMGKKGILTQQFALLKNLEGETKKTFAKELNKNKENFEKMLESKRESLLKVQMNENLTKEVVDASLFTALRPKSNGHPIYQTMDRIIDFFVNMNFAIQTGPLVEDDFHNFEALNLPVFHPARDMQDTFYFKDSMLLRTHTSPVQIRTMQSQHIPIRMIAPGSVFRRDYDLTHSPMFHQVEGLVVDEKDKISFVHLKYILEDFLHYMFGDVRIRFRSSFFPFTEPSAEVDISCVFCGGSGCRVCSHTGWLEVLGCGIVNQKVFDAVGHKNVSGYAFGLGVERFAMLLHRVNDLRSFFETDLRVLEQF</sequence>
<protein>
    <recommendedName>
        <fullName evidence="1">Phenylalanine--tRNA ligase alpha subunit</fullName>
        <ecNumber evidence="1">6.1.1.20</ecNumber>
    </recommendedName>
    <alternativeName>
        <fullName evidence="1">Phenylalanyl-tRNA synthetase alpha subunit</fullName>
        <shortName evidence="1">PheRS</shortName>
    </alternativeName>
</protein>
<comment type="catalytic activity">
    <reaction evidence="1">
        <text>tRNA(Phe) + L-phenylalanine + ATP = L-phenylalanyl-tRNA(Phe) + AMP + diphosphate + H(+)</text>
        <dbReference type="Rhea" id="RHEA:19413"/>
        <dbReference type="Rhea" id="RHEA-COMP:9668"/>
        <dbReference type="Rhea" id="RHEA-COMP:9699"/>
        <dbReference type="ChEBI" id="CHEBI:15378"/>
        <dbReference type="ChEBI" id="CHEBI:30616"/>
        <dbReference type="ChEBI" id="CHEBI:33019"/>
        <dbReference type="ChEBI" id="CHEBI:58095"/>
        <dbReference type="ChEBI" id="CHEBI:78442"/>
        <dbReference type="ChEBI" id="CHEBI:78531"/>
        <dbReference type="ChEBI" id="CHEBI:456215"/>
        <dbReference type="EC" id="6.1.1.20"/>
    </reaction>
</comment>
<comment type="cofactor">
    <cofactor evidence="1">
        <name>Mg(2+)</name>
        <dbReference type="ChEBI" id="CHEBI:18420"/>
    </cofactor>
    <text evidence="1">Binds 2 magnesium ions per tetramer.</text>
</comment>
<comment type="subunit">
    <text evidence="1">Tetramer of two alpha and two beta subunits.</text>
</comment>
<comment type="subcellular location">
    <subcellularLocation>
        <location evidence="1">Cytoplasm</location>
    </subcellularLocation>
</comment>
<comment type="similarity">
    <text evidence="1">Belongs to the class-II aminoacyl-tRNA synthetase family. Phe-tRNA synthetase alpha subunit type 1 subfamily.</text>
</comment>
<comment type="sequence caution" evidence="2">
    <conflict type="erroneous initiation">
        <sequence resource="EMBL-CDS" id="AAP76625"/>
    </conflict>
</comment>